<evidence type="ECO:0000250" key="1"/>
<evidence type="ECO:0000250" key="2">
    <source>
        <dbReference type="UniProtKB" id="P24385"/>
    </source>
</evidence>
<evidence type="ECO:0000305" key="3"/>
<name>CCND1_XENLA</name>
<feature type="chain" id="PRO_0000080436" description="G1/S-specific cyclin-D1">
    <location>
        <begin position="1"/>
        <end position="291"/>
    </location>
</feature>
<feature type="modified residue" description="Phosphothreonine" evidence="1">
    <location>
        <position position="282"/>
    </location>
</feature>
<proteinExistence type="evidence at protein level"/>
<comment type="function">
    <text evidence="2">Regulatory component of the cyclin D1-CDK4 (DC) complex that phosphorylates and inhibits members of the retinoblastoma (RB) protein family including RB1 and regulates the cell-cycle during G(1)/S transition. Phosphorylation of RB1 allows dissociation of the transcription factor E2F from the RB/E2F complex and the subsequent transcription of E2F target genes which are responsible for the progression through the G(1) phase. Hypophosphorylates RB1 in early G(1) phase. Cyclin D-CDK4 complexes are major integrators of various mitogenenic and antimitogenic signals.</text>
</comment>
<comment type="subunit">
    <text evidence="2">Interacts with the cdk4 and cdk6 protein kinases to form a serine/threonine kinase holoenzyme complex (By similarity). The cyclin subunit imparts substrate specificity to the complex (By similarity).</text>
</comment>
<comment type="interaction">
    <interactant intactId="EBI-7270567">
        <id>P50755</id>
    </interactant>
    <interactant intactId="EBI-7270544">
        <id>Q91727</id>
        <label>cdk4</label>
    </interactant>
    <organismsDiffer>false</organismsDiffer>
    <experiments>2</experiments>
</comment>
<comment type="subcellular location">
    <subcellularLocation>
        <location evidence="2">Nucleus</location>
    </subcellularLocation>
    <subcellularLocation>
        <location evidence="2">Cytoplasm</location>
    </subcellularLocation>
</comment>
<comment type="PTM">
    <text evidence="2">Phosphorylation at Thr-282 by MAP kinases is required for ubiquitination and degradation by the DCX(AMBRA1) complex.</text>
</comment>
<comment type="PTM">
    <text evidence="2">Ubiquitinated by the DCX(AMBRA1) complex during the transition from G1 to S cell phase, leading to its degradation. The DCX(AMBRA1) complex represents the major regulator of CCND1 stability during the G1/S transition.</text>
</comment>
<comment type="similarity">
    <text evidence="3">Belongs to the cyclin family. Cyclin D subfamily.</text>
</comment>
<gene>
    <name type="primary">ccnd1</name>
</gene>
<keyword id="KW-0131">Cell cycle</keyword>
<keyword id="KW-0132">Cell division</keyword>
<keyword id="KW-0195">Cyclin</keyword>
<keyword id="KW-0963">Cytoplasm</keyword>
<keyword id="KW-0539">Nucleus</keyword>
<keyword id="KW-0597">Phosphoprotein</keyword>
<keyword id="KW-1185">Reference proteome</keyword>
<keyword id="KW-0804">Transcription</keyword>
<keyword id="KW-0805">Transcription regulation</keyword>
<keyword id="KW-0832">Ubl conjugation</keyword>
<sequence length="291" mass="32953">MELLCCEVDTIGRAHLDRNLITDRVLQTMLKAEETSCPSMSYFKCVQKEILPNMRKIVATWMLEVCEEQKCEEEVFPLAMNYLDRFLSVEPLRKSWLQLLGATCMFLASKMKETIPLTAEKLCIYTDNSIRPDELLIMELRVLNKLKWDLASVTPHDFIEHFLNKMPLTEDTKQIIRKHAQTFVALCATDVNFISNPPSMIAAGSVAAAVQGLNLGNADSVFSTQRLTLFLSQVIKCDPDCLRACQEQIESLLESSLRQAQQQHNASSDTKNMVDEVDISCTPTDVRDVNI</sequence>
<organism>
    <name type="scientific">Xenopus laevis</name>
    <name type="common">African clawed frog</name>
    <dbReference type="NCBI Taxonomy" id="8355"/>
    <lineage>
        <taxon>Eukaryota</taxon>
        <taxon>Metazoa</taxon>
        <taxon>Chordata</taxon>
        <taxon>Craniata</taxon>
        <taxon>Vertebrata</taxon>
        <taxon>Euteleostomi</taxon>
        <taxon>Amphibia</taxon>
        <taxon>Batrachia</taxon>
        <taxon>Anura</taxon>
        <taxon>Pipoidea</taxon>
        <taxon>Pipidae</taxon>
        <taxon>Xenopodinae</taxon>
        <taxon>Xenopus</taxon>
        <taxon>Xenopus</taxon>
    </lineage>
</organism>
<accession>P50755</accession>
<protein>
    <recommendedName>
        <fullName>G1/S-specific cyclin-D1</fullName>
    </recommendedName>
</protein>
<reference key="1">
    <citation type="submission" date="1995-07" db="EMBL/GenBank/DDBJ databases">
        <authorList>
            <person name="Cockerill M.J."/>
            <person name="Hunt T."/>
        </authorList>
    </citation>
    <scope>NUCLEOTIDE SEQUENCE [MRNA]</scope>
</reference>
<dbReference type="EMBL" id="X89475">
    <property type="protein sequence ID" value="CAA61664.1"/>
    <property type="molecule type" value="mRNA"/>
</dbReference>
<dbReference type="PIR" id="S57922">
    <property type="entry name" value="S57922"/>
</dbReference>
<dbReference type="SMR" id="P50755"/>
<dbReference type="IntAct" id="P50755">
    <property type="interactions" value="1"/>
</dbReference>
<dbReference type="MINT" id="P50755"/>
<dbReference type="AGR" id="Xenbase:XB-GENE-6077366"/>
<dbReference type="Xenbase" id="XB-GENE-6077366">
    <property type="gene designation" value="ccnd1.L"/>
</dbReference>
<dbReference type="Proteomes" id="UP000186698">
    <property type="component" value="Unplaced"/>
</dbReference>
<dbReference type="GO" id="GO:0000307">
    <property type="term" value="C:cyclin-dependent protein kinase holoenzyme complex"/>
    <property type="evidence" value="ECO:0000318"/>
    <property type="project" value="GO_Central"/>
</dbReference>
<dbReference type="GO" id="GO:0005737">
    <property type="term" value="C:cytoplasm"/>
    <property type="evidence" value="ECO:0000318"/>
    <property type="project" value="GO_Central"/>
</dbReference>
<dbReference type="GO" id="GO:0005815">
    <property type="term" value="C:microtubule organizing center"/>
    <property type="evidence" value="ECO:0000318"/>
    <property type="project" value="GO_Central"/>
</dbReference>
<dbReference type="GO" id="GO:0005634">
    <property type="term" value="C:nucleus"/>
    <property type="evidence" value="ECO:0000250"/>
    <property type="project" value="UniProtKB"/>
</dbReference>
<dbReference type="GO" id="GO:0017053">
    <property type="term" value="C:transcription repressor complex"/>
    <property type="evidence" value="ECO:0000250"/>
    <property type="project" value="UniProtKB"/>
</dbReference>
<dbReference type="GO" id="GO:0016538">
    <property type="term" value="F:cyclin-dependent protein serine/threonine kinase regulator activity"/>
    <property type="evidence" value="ECO:0000318"/>
    <property type="project" value="GO_Central"/>
</dbReference>
<dbReference type="GO" id="GO:0003714">
    <property type="term" value="F:transcription corepressor activity"/>
    <property type="evidence" value="ECO:0000250"/>
    <property type="project" value="UniProtKB"/>
</dbReference>
<dbReference type="GO" id="GO:0051301">
    <property type="term" value="P:cell division"/>
    <property type="evidence" value="ECO:0007669"/>
    <property type="project" value="UniProtKB-KW"/>
</dbReference>
<dbReference type="GO" id="GO:0006974">
    <property type="term" value="P:DNA damage response"/>
    <property type="evidence" value="ECO:0000250"/>
    <property type="project" value="UniProtKB"/>
</dbReference>
<dbReference type="GO" id="GO:0000082">
    <property type="term" value="P:G1/S transition of mitotic cell cycle"/>
    <property type="evidence" value="ECO:0000250"/>
    <property type="project" value="UniProtKB"/>
</dbReference>
<dbReference type="GO" id="GO:0031571">
    <property type="term" value="P:mitotic G1 DNA damage checkpoint signaling"/>
    <property type="evidence" value="ECO:0000250"/>
    <property type="project" value="UniProtKB"/>
</dbReference>
<dbReference type="GO" id="GO:0000122">
    <property type="term" value="P:negative regulation of transcription by RNA polymerase II"/>
    <property type="evidence" value="ECO:0000250"/>
    <property type="project" value="UniProtKB"/>
</dbReference>
<dbReference type="GO" id="GO:1900087">
    <property type="term" value="P:positive regulation of G1/S transition of mitotic cell cycle"/>
    <property type="evidence" value="ECO:0000318"/>
    <property type="project" value="GO_Central"/>
</dbReference>
<dbReference type="GO" id="GO:0010971">
    <property type="term" value="P:positive regulation of G2/M transition of mitotic cell cycle"/>
    <property type="evidence" value="ECO:0000250"/>
    <property type="project" value="UniProtKB"/>
</dbReference>
<dbReference type="CDD" id="cd20573">
    <property type="entry name" value="CYCLIN_CCND1_rpt1"/>
    <property type="match status" value="1"/>
</dbReference>
<dbReference type="CDD" id="cd20576">
    <property type="entry name" value="CYCLIN_CCND1_rpt2"/>
    <property type="match status" value="1"/>
</dbReference>
<dbReference type="FunFam" id="1.10.472.10:FF:000120">
    <property type="entry name" value="G1/S-specific cyclin-D1"/>
    <property type="match status" value="1"/>
</dbReference>
<dbReference type="Gene3D" id="1.10.472.10">
    <property type="entry name" value="Cyclin-like"/>
    <property type="match status" value="2"/>
</dbReference>
<dbReference type="InterPro" id="IPR039361">
    <property type="entry name" value="Cyclin"/>
</dbReference>
<dbReference type="InterPro" id="IPR013763">
    <property type="entry name" value="Cyclin-like_dom"/>
</dbReference>
<dbReference type="InterPro" id="IPR036915">
    <property type="entry name" value="Cyclin-like_sf"/>
</dbReference>
<dbReference type="InterPro" id="IPR004367">
    <property type="entry name" value="Cyclin_C-dom"/>
</dbReference>
<dbReference type="InterPro" id="IPR006671">
    <property type="entry name" value="Cyclin_N"/>
</dbReference>
<dbReference type="InterPro" id="IPR048258">
    <property type="entry name" value="Cyclins_cyclin-box"/>
</dbReference>
<dbReference type="PANTHER" id="PTHR10177">
    <property type="entry name" value="CYCLINS"/>
    <property type="match status" value="1"/>
</dbReference>
<dbReference type="Pfam" id="PF02984">
    <property type="entry name" value="Cyclin_C"/>
    <property type="match status" value="1"/>
</dbReference>
<dbReference type="Pfam" id="PF00134">
    <property type="entry name" value="Cyclin_N"/>
    <property type="match status" value="1"/>
</dbReference>
<dbReference type="SMART" id="SM00385">
    <property type="entry name" value="CYCLIN"/>
    <property type="match status" value="1"/>
</dbReference>
<dbReference type="SMART" id="SM01332">
    <property type="entry name" value="Cyclin_C"/>
    <property type="match status" value="1"/>
</dbReference>
<dbReference type="SUPFAM" id="SSF47954">
    <property type="entry name" value="Cyclin-like"/>
    <property type="match status" value="2"/>
</dbReference>
<dbReference type="PROSITE" id="PS00292">
    <property type="entry name" value="CYCLINS"/>
    <property type="match status" value="1"/>
</dbReference>